<gene>
    <name evidence="1" type="primary">rsmH</name>
    <name type="synonym">mraW</name>
    <name type="ordered locus">cce_0084</name>
</gene>
<proteinExistence type="inferred from homology"/>
<accession>B1WZ70</accession>
<organism>
    <name type="scientific">Crocosphaera subtropica (strain ATCC 51142 / BH68)</name>
    <name type="common">Cyanothece sp. (strain ATCC 51142)</name>
    <dbReference type="NCBI Taxonomy" id="43989"/>
    <lineage>
        <taxon>Bacteria</taxon>
        <taxon>Bacillati</taxon>
        <taxon>Cyanobacteriota</taxon>
        <taxon>Cyanophyceae</taxon>
        <taxon>Oscillatoriophycideae</taxon>
        <taxon>Chroococcales</taxon>
        <taxon>Aphanothecaceae</taxon>
        <taxon>Crocosphaera</taxon>
        <taxon>Crocosphaera subtropica</taxon>
    </lineage>
</organism>
<comment type="function">
    <text evidence="1">Specifically methylates the N4 position of cytidine in position 1402 (C1402) of 16S rRNA.</text>
</comment>
<comment type="catalytic activity">
    <reaction evidence="1">
        <text>cytidine(1402) in 16S rRNA + S-adenosyl-L-methionine = N(4)-methylcytidine(1402) in 16S rRNA + S-adenosyl-L-homocysteine + H(+)</text>
        <dbReference type="Rhea" id="RHEA:42928"/>
        <dbReference type="Rhea" id="RHEA-COMP:10286"/>
        <dbReference type="Rhea" id="RHEA-COMP:10287"/>
        <dbReference type="ChEBI" id="CHEBI:15378"/>
        <dbReference type="ChEBI" id="CHEBI:57856"/>
        <dbReference type="ChEBI" id="CHEBI:59789"/>
        <dbReference type="ChEBI" id="CHEBI:74506"/>
        <dbReference type="ChEBI" id="CHEBI:82748"/>
        <dbReference type="EC" id="2.1.1.199"/>
    </reaction>
</comment>
<comment type="subcellular location">
    <subcellularLocation>
        <location evidence="1">Cytoplasm</location>
    </subcellularLocation>
</comment>
<comment type="similarity">
    <text evidence="1">Belongs to the methyltransferase superfamily. RsmH family.</text>
</comment>
<name>RSMH_CROS5</name>
<reference key="1">
    <citation type="journal article" date="2008" name="Proc. Natl. Acad. Sci. U.S.A.">
        <title>The genome of Cyanothece 51142, a unicellular diazotrophic cyanobacterium important in the marine nitrogen cycle.</title>
        <authorList>
            <person name="Welsh E.A."/>
            <person name="Liberton M."/>
            <person name="Stoeckel J."/>
            <person name="Loh T."/>
            <person name="Elvitigala T."/>
            <person name="Wang C."/>
            <person name="Wollam A."/>
            <person name="Fulton R.S."/>
            <person name="Clifton S.W."/>
            <person name="Jacobs J.M."/>
            <person name="Aurora R."/>
            <person name="Ghosh B.K."/>
            <person name="Sherman L.A."/>
            <person name="Smith R.D."/>
            <person name="Wilson R.K."/>
            <person name="Pakrasi H.B."/>
        </authorList>
    </citation>
    <scope>NUCLEOTIDE SEQUENCE [LARGE SCALE GENOMIC DNA]</scope>
    <source>
        <strain>ATCC 51142 / BH68</strain>
    </source>
</reference>
<sequence length="315" mass="35840">MYFIFSTASLSSVTLIVMTNTDHPNQPNPPHLHTPVLCQEVIDGLAIEPNGHYLDATLGRGGHSRLILEAFPDVRVTGIDLDEEAIAITQENFSLMGDKRLQVWQGNFADYPGEIGEFNGIIADLGVSSPQFDVPERGFSFRHQAPLDMRMNREQSLTAGEIINHWDQTSLADLFYQYGEERRSRAIARRLVQQRPFETTTELAEAIAKCFPPKQRYGRIHPATRVFQALRIAVNDELGSLERFLEKAPHWLKPGGRIGIISFHSLEDRRVKYSFRDSLLLDVITKKPIIPQPEEEEKNPRSRSAKLRFAQRKPL</sequence>
<protein>
    <recommendedName>
        <fullName evidence="1">Ribosomal RNA small subunit methyltransferase H</fullName>
        <ecNumber evidence="1">2.1.1.199</ecNumber>
    </recommendedName>
    <alternativeName>
        <fullName evidence="1">16S rRNA m(4)C1402 methyltransferase</fullName>
    </alternativeName>
    <alternativeName>
        <fullName evidence="1">rRNA (cytosine-N(4)-)-methyltransferase RsmH</fullName>
    </alternativeName>
</protein>
<evidence type="ECO:0000255" key="1">
    <source>
        <dbReference type="HAMAP-Rule" id="MF_01007"/>
    </source>
</evidence>
<evidence type="ECO:0000256" key="2">
    <source>
        <dbReference type="SAM" id="MobiDB-lite"/>
    </source>
</evidence>
<keyword id="KW-0963">Cytoplasm</keyword>
<keyword id="KW-0489">Methyltransferase</keyword>
<keyword id="KW-1185">Reference proteome</keyword>
<keyword id="KW-0698">rRNA processing</keyword>
<keyword id="KW-0949">S-adenosyl-L-methionine</keyword>
<keyword id="KW-0808">Transferase</keyword>
<dbReference type="EC" id="2.1.1.199" evidence="1"/>
<dbReference type="EMBL" id="CP000806">
    <property type="protein sequence ID" value="ACB49436.1"/>
    <property type="molecule type" value="Genomic_DNA"/>
</dbReference>
<dbReference type="SMR" id="B1WZ70"/>
<dbReference type="STRING" id="43989.cce_0084"/>
<dbReference type="KEGG" id="cyt:cce_0084"/>
<dbReference type="eggNOG" id="COG0275">
    <property type="taxonomic scope" value="Bacteria"/>
</dbReference>
<dbReference type="HOGENOM" id="CLU_038422_3_0_3"/>
<dbReference type="Proteomes" id="UP000001203">
    <property type="component" value="Chromosome circular"/>
</dbReference>
<dbReference type="GO" id="GO:0005737">
    <property type="term" value="C:cytoplasm"/>
    <property type="evidence" value="ECO:0007669"/>
    <property type="project" value="UniProtKB-SubCell"/>
</dbReference>
<dbReference type="GO" id="GO:0071424">
    <property type="term" value="F:rRNA (cytosine-N4-)-methyltransferase activity"/>
    <property type="evidence" value="ECO:0007669"/>
    <property type="project" value="UniProtKB-UniRule"/>
</dbReference>
<dbReference type="GO" id="GO:0070475">
    <property type="term" value="P:rRNA base methylation"/>
    <property type="evidence" value="ECO:0007669"/>
    <property type="project" value="UniProtKB-UniRule"/>
</dbReference>
<dbReference type="CDD" id="cd02440">
    <property type="entry name" value="AdoMet_MTases"/>
    <property type="match status" value="1"/>
</dbReference>
<dbReference type="Gene3D" id="1.10.150.170">
    <property type="entry name" value="Putative methyltransferase TM0872, insert domain"/>
    <property type="match status" value="1"/>
</dbReference>
<dbReference type="Gene3D" id="3.40.50.150">
    <property type="entry name" value="Vaccinia Virus protein VP39"/>
    <property type="match status" value="1"/>
</dbReference>
<dbReference type="HAMAP" id="MF_01007">
    <property type="entry name" value="16SrRNA_methyltr_H"/>
    <property type="match status" value="1"/>
</dbReference>
<dbReference type="InterPro" id="IPR002903">
    <property type="entry name" value="RsmH"/>
</dbReference>
<dbReference type="InterPro" id="IPR023397">
    <property type="entry name" value="SAM-dep_MeTrfase_MraW_recog"/>
</dbReference>
<dbReference type="InterPro" id="IPR029063">
    <property type="entry name" value="SAM-dependent_MTases_sf"/>
</dbReference>
<dbReference type="NCBIfam" id="TIGR00006">
    <property type="entry name" value="16S rRNA (cytosine(1402)-N(4))-methyltransferase RsmH"/>
    <property type="match status" value="1"/>
</dbReference>
<dbReference type="PANTHER" id="PTHR11265:SF0">
    <property type="entry name" value="12S RRNA N4-METHYLCYTIDINE METHYLTRANSFERASE"/>
    <property type="match status" value="1"/>
</dbReference>
<dbReference type="PANTHER" id="PTHR11265">
    <property type="entry name" value="S-ADENOSYL-METHYLTRANSFERASE MRAW"/>
    <property type="match status" value="1"/>
</dbReference>
<dbReference type="Pfam" id="PF01795">
    <property type="entry name" value="Methyltransf_5"/>
    <property type="match status" value="1"/>
</dbReference>
<dbReference type="PIRSF" id="PIRSF004486">
    <property type="entry name" value="MraW"/>
    <property type="match status" value="1"/>
</dbReference>
<dbReference type="SUPFAM" id="SSF81799">
    <property type="entry name" value="Putative methyltransferase TM0872, insert domain"/>
    <property type="match status" value="1"/>
</dbReference>
<dbReference type="SUPFAM" id="SSF53335">
    <property type="entry name" value="S-adenosyl-L-methionine-dependent methyltransferases"/>
    <property type="match status" value="1"/>
</dbReference>
<feature type="chain" id="PRO_0000386836" description="Ribosomal RNA small subunit methyltransferase H">
    <location>
        <begin position="1"/>
        <end position="315"/>
    </location>
</feature>
<feature type="region of interest" description="Disordered" evidence="2">
    <location>
        <begin position="291"/>
        <end position="315"/>
    </location>
</feature>
<feature type="compositionally biased region" description="Basic residues" evidence="2">
    <location>
        <begin position="301"/>
        <end position="315"/>
    </location>
</feature>
<feature type="binding site" evidence="1">
    <location>
        <begin position="61"/>
        <end position="63"/>
    </location>
    <ligand>
        <name>S-adenosyl-L-methionine</name>
        <dbReference type="ChEBI" id="CHEBI:59789"/>
    </ligand>
</feature>
<feature type="binding site" evidence="1">
    <location>
        <position position="80"/>
    </location>
    <ligand>
        <name>S-adenosyl-L-methionine</name>
        <dbReference type="ChEBI" id="CHEBI:59789"/>
    </ligand>
</feature>
<feature type="binding site" evidence="1">
    <location>
        <position position="108"/>
    </location>
    <ligand>
        <name>S-adenosyl-L-methionine</name>
        <dbReference type="ChEBI" id="CHEBI:59789"/>
    </ligand>
</feature>
<feature type="binding site" evidence="1">
    <location>
        <position position="124"/>
    </location>
    <ligand>
        <name>S-adenosyl-L-methionine</name>
        <dbReference type="ChEBI" id="CHEBI:59789"/>
    </ligand>
</feature>
<feature type="binding site" evidence="1">
    <location>
        <position position="131"/>
    </location>
    <ligand>
        <name>S-adenosyl-L-methionine</name>
        <dbReference type="ChEBI" id="CHEBI:59789"/>
    </ligand>
</feature>